<evidence type="ECO:0000255" key="1"/>
<evidence type="ECO:0000269" key="2">
    <source>
    </source>
</evidence>
<evidence type="ECO:0000305" key="3"/>
<protein>
    <recommendedName>
        <fullName>Allene oxide cyclase 3, chloroplastic</fullName>
        <ecNumber>5.3.99.6</ecNumber>
    </recommendedName>
</protein>
<gene>
    <name type="primary">AOC3</name>
    <name type="ordered locus">At3g25780</name>
    <name type="ORF">K13N2.12</name>
    <name type="ORF">K13N2_10</name>
</gene>
<sequence length="258" mass="28398">MASSSAAMSLESISMTTLNNLSRNHQSHRSSLLGFSRSFQNLGISSNGPDFSSRSRSTTSKNLNVTRAFFWNWGKKTENSRPSKIQELNVYELNEGDRNSPAVLKLGKKPTELCLGDLVPFTNKLYTGDLKKRVGITAGLCVLIQHVPEKSGDRFEASYSFYFGDYGHLSVQGQYLTYEDTFLAVTGGSGIFEGAYGQVKLRQLVYPTKLFYTFYLKGLANDLPLELTGTAVTPSKDVKPAPEAKAMEPSGVISNFTN</sequence>
<accession>Q9LS01</accession>
<reference key="1">
    <citation type="journal article" date="2003" name="Plant Mol. Biol.">
        <title>Jasmonate biosynthesis and the allene oxide cyclase family of Arabidopsis thaliana.</title>
        <authorList>
            <person name="Stenzel I."/>
            <person name="Hause B."/>
            <person name="Miersch O."/>
            <person name="Kurz T."/>
            <person name="Maucher H."/>
            <person name="Weichart H."/>
            <person name="Ziegler J."/>
            <person name="Feussner I."/>
            <person name="Wasternack C."/>
        </authorList>
    </citation>
    <scope>NUCLEOTIDE SEQUENCE [MRNA]</scope>
    <scope>TISSUE SPECIFICITY</scope>
    <scope>SUBCELLULAR LOCATION</scope>
    <scope>INDUCTION</scope>
    <source>
        <strain>cv. Columbia</strain>
        <tissue>Leaf</tissue>
    </source>
</reference>
<reference key="2">
    <citation type="journal article" date="2000" name="DNA Res.">
        <title>Structural analysis of Arabidopsis thaliana chromosome 3. I. Sequence features of the regions of 4,504,864 bp covered by sixty P1 and TAC clones.</title>
        <authorList>
            <person name="Sato S."/>
            <person name="Nakamura Y."/>
            <person name="Kaneko T."/>
            <person name="Katoh T."/>
            <person name="Asamizu E."/>
            <person name="Tabata S."/>
        </authorList>
    </citation>
    <scope>NUCLEOTIDE SEQUENCE [LARGE SCALE GENOMIC DNA]</scope>
    <source>
        <strain>cv. Columbia</strain>
    </source>
</reference>
<reference key="3">
    <citation type="journal article" date="2017" name="Plant J.">
        <title>Araport11: a complete reannotation of the Arabidopsis thaliana reference genome.</title>
        <authorList>
            <person name="Cheng C.Y."/>
            <person name="Krishnakumar V."/>
            <person name="Chan A.P."/>
            <person name="Thibaud-Nissen F."/>
            <person name="Schobel S."/>
            <person name="Town C.D."/>
        </authorList>
    </citation>
    <scope>GENOME REANNOTATION</scope>
    <source>
        <strain>cv. Columbia</strain>
    </source>
</reference>
<reference key="4">
    <citation type="submission" date="2002-03" db="EMBL/GenBank/DDBJ databases">
        <title>Full-length cDNA from Arabidopsis thaliana.</title>
        <authorList>
            <person name="Brover V.V."/>
            <person name="Troukhan M.E."/>
            <person name="Alexandrov N.A."/>
            <person name="Lu Y.-P."/>
            <person name="Flavell R.B."/>
            <person name="Feldmann K.A."/>
        </authorList>
    </citation>
    <scope>NUCLEOTIDE SEQUENCE [LARGE SCALE MRNA]</scope>
</reference>
<feature type="transit peptide" description="Chloroplast" evidence="1">
    <location>
        <begin position="1"/>
        <end position="56"/>
    </location>
</feature>
<feature type="chain" id="PRO_0000001704" description="Allene oxide cyclase 3, chloroplastic">
    <location>
        <begin position="57"/>
        <end position="258"/>
    </location>
</feature>
<keyword id="KW-0150">Chloroplast</keyword>
<keyword id="KW-0413">Isomerase</keyword>
<keyword id="KW-0934">Plastid</keyword>
<keyword id="KW-1185">Reference proteome</keyword>
<keyword id="KW-0809">Transit peptide</keyword>
<name>AOC3_ARATH</name>
<comment type="function">
    <text>Involved in the production of 12-oxo-phytodienoic acid (OPDA), a precursor of jasmonic acid.</text>
</comment>
<comment type="catalytic activity">
    <reaction>
        <text>(9Z,13S,15Z)-12,13-epoxyoctadeca-9,11,15-trienoate = (9S,13S,15Z)-12-oxophyto-10,15-dienoate</text>
        <dbReference type="Rhea" id="RHEA:22592"/>
        <dbReference type="ChEBI" id="CHEBI:36438"/>
        <dbReference type="ChEBI" id="CHEBI:57411"/>
        <dbReference type="EC" id="5.3.99.6"/>
    </reaction>
</comment>
<comment type="subcellular location">
    <subcellularLocation>
        <location evidence="2">Plastid</location>
        <location evidence="2">Chloroplast</location>
    </subcellularLocation>
</comment>
<comment type="tissue specificity">
    <text evidence="2">Highly expressed in fully developed leaves.</text>
</comment>
<comment type="induction">
    <text evidence="2">Low local and systemic induction by wounding.</text>
</comment>
<comment type="miscellaneous">
    <text>The four allene oxide cyclase proteins (AOC1, AOC2, AOC3 and AOC4) are encoded by duplicated genes. They are very similar, and most experiments involving antibodies do not discriminate between the different members.</text>
</comment>
<comment type="similarity">
    <text evidence="3">Belongs to the allene oxide cyclase family.</text>
</comment>
<dbReference type="EC" id="5.3.99.6"/>
<dbReference type="EMBL" id="AJ308485">
    <property type="protein sequence ID" value="CAC83763.1"/>
    <property type="molecule type" value="mRNA"/>
</dbReference>
<dbReference type="EMBL" id="AB028607">
    <property type="protein sequence ID" value="BAA95765.1"/>
    <property type="molecule type" value="Genomic_DNA"/>
</dbReference>
<dbReference type="EMBL" id="CP002686">
    <property type="protein sequence ID" value="AEE77067.1"/>
    <property type="molecule type" value="Genomic_DNA"/>
</dbReference>
<dbReference type="EMBL" id="AY087359">
    <property type="protein sequence ID" value="AAM64909.1"/>
    <property type="molecule type" value="mRNA"/>
</dbReference>
<dbReference type="RefSeq" id="NP_566777.1">
    <property type="nucleotide sequence ID" value="NM_113477.5"/>
</dbReference>
<dbReference type="SMR" id="Q9LS01"/>
<dbReference type="FunCoup" id="Q9LS01">
    <property type="interactions" value="482"/>
</dbReference>
<dbReference type="STRING" id="3702.Q9LS01"/>
<dbReference type="GlyGen" id="Q9LS01">
    <property type="glycosylation" value="1 site"/>
</dbReference>
<dbReference type="SwissPalm" id="Q9LS01"/>
<dbReference type="PaxDb" id="3702-AT3G25780.1"/>
<dbReference type="ProteomicsDB" id="245020"/>
<dbReference type="EnsemblPlants" id="AT3G25780.1">
    <property type="protein sequence ID" value="AT3G25780.1"/>
    <property type="gene ID" value="AT3G25780"/>
</dbReference>
<dbReference type="GeneID" id="822169"/>
<dbReference type="Gramene" id="AT3G25780.1">
    <property type="protein sequence ID" value="AT3G25780.1"/>
    <property type="gene ID" value="AT3G25780"/>
</dbReference>
<dbReference type="KEGG" id="ath:AT3G25780"/>
<dbReference type="Araport" id="AT3G25780"/>
<dbReference type="TAIR" id="AT3G25780">
    <property type="gene designation" value="AOC3"/>
</dbReference>
<dbReference type="eggNOG" id="ENOG502QPP8">
    <property type="taxonomic scope" value="Eukaryota"/>
</dbReference>
<dbReference type="HOGENOM" id="CLU_069000_0_0_1"/>
<dbReference type="InParanoid" id="Q9LS01"/>
<dbReference type="OMA" id="LYTGCLQ"/>
<dbReference type="OrthoDB" id="1894474at2759"/>
<dbReference type="PhylomeDB" id="Q9LS01"/>
<dbReference type="BioCyc" id="ARA:AT3G25780-MONOMER"/>
<dbReference type="BRENDA" id="5.3.99.6">
    <property type="organism ID" value="399"/>
</dbReference>
<dbReference type="PRO" id="PR:Q9LS01"/>
<dbReference type="Proteomes" id="UP000006548">
    <property type="component" value="Chromosome 3"/>
</dbReference>
<dbReference type="ExpressionAtlas" id="Q9LS01">
    <property type="expression patterns" value="baseline and differential"/>
</dbReference>
<dbReference type="GO" id="GO:0009507">
    <property type="term" value="C:chloroplast"/>
    <property type="evidence" value="ECO:0007669"/>
    <property type="project" value="UniProtKB-SubCell"/>
</dbReference>
<dbReference type="GO" id="GO:0000325">
    <property type="term" value="C:plant-type vacuole"/>
    <property type="evidence" value="ECO:0007005"/>
    <property type="project" value="TAIR"/>
</dbReference>
<dbReference type="GO" id="GO:0005886">
    <property type="term" value="C:plasma membrane"/>
    <property type="evidence" value="ECO:0007005"/>
    <property type="project" value="TAIR"/>
</dbReference>
<dbReference type="GO" id="GO:0046423">
    <property type="term" value="F:allene-oxide cyclase activity"/>
    <property type="evidence" value="ECO:0000250"/>
    <property type="project" value="TAIR"/>
</dbReference>
<dbReference type="GO" id="GO:0009695">
    <property type="term" value="P:jasmonic acid biosynthetic process"/>
    <property type="evidence" value="ECO:0000304"/>
    <property type="project" value="TAIR"/>
</dbReference>
<dbReference type="GO" id="GO:0009620">
    <property type="term" value="P:response to fungus"/>
    <property type="evidence" value="ECO:0000270"/>
    <property type="project" value="TAIR"/>
</dbReference>
<dbReference type="FunFam" id="2.40.480.10:FF:000001">
    <property type="entry name" value="Allene oxide cyclase, chloroplastic"/>
    <property type="match status" value="1"/>
</dbReference>
<dbReference type="Gene3D" id="2.40.480.10">
    <property type="entry name" value="Allene oxide cyclase-like"/>
    <property type="match status" value="1"/>
</dbReference>
<dbReference type="InterPro" id="IPR009410">
    <property type="entry name" value="Allene_ox_cyc"/>
</dbReference>
<dbReference type="InterPro" id="IPR044859">
    <property type="entry name" value="Allene_oxi_cyc_Dirigent"/>
</dbReference>
<dbReference type="InterPro" id="IPR034871">
    <property type="entry name" value="Allene_oxi_cyc_sf"/>
</dbReference>
<dbReference type="PANTHER" id="PTHR31843:SF19">
    <property type="entry name" value="ALLENE OXIDE CYCLASE 3, CHLOROPLASTIC"/>
    <property type="match status" value="1"/>
</dbReference>
<dbReference type="PANTHER" id="PTHR31843">
    <property type="entry name" value="ALLENE OXIDE CYCLASE 4, CHLOROPLASTIC"/>
    <property type="match status" value="1"/>
</dbReference>
<dbReference type="Pfam" id="PF06351">
    <property type="entry name" value="Allene_ox_cyc"/>
    <property type="match status" value="1"/>
</dbReference>
<dbReference type="SUPFAM" id="SSF141493">
    <property type="entry name" value="Allene oxide cyclase-like"/>
    <property type="match status" value="1"/>
</dbReference>
<organism>
    <name type="scientific">Arabidopsis thaliana</name>
    <name type="common">Mouse-ear cress</name>
    <dbReference type="NCBI Taxonomy" id="3702"/>
    <lineage>
        <taxon>Eukaryota</taxon>
        <taxon>Viridiplantae</taxon>
        <taxon>Streptophyta</taxon>
        <taxon>Embryophyta</taxon>
        <taxon>Tracheophyta</taxon>
        <taxon>Spermatophyta</taxon>
        <taxon>Magnoliopsida</taxon>
        <taxon>eudicotyledons</taxon>
        <taxon>Gunneridae</taxon>
        <taxon>Pentapetalae</taxon>
        <taxon>rosids</taxon>
        <taxon>malvids</taxon>
        <taxon>Brassicales</taxon>
        <taxon>Brassicaceae</taxon>
        <taxon>Camelineae</taxon>
        <taxon>Arabidopsis</taxon>
    </lineage>
</organism>
<proteinExistence type="evidence at transcript level"/>